<organism>
    <name type="scientific">Shewanella baltica (strain OS195)</name>
    <dbReference type="NCBI Taxonomy" id="399599"/>
    <lineage>
        <taxon>Bacteria</taxon>
        <taxon>Pseudomonadati</taxon>
        <taxon>Pseudomonadota</taxon>
        <taxon>Gammaproteobacteria</taxon>
        <taxon>Alteromonadales</taxon>
        <taxon>Shewanellaceae</taxon>
        <taxon>Shewanella</taxon>
    </lineage>
</organism>
<reference key="1">
    <citation type="submission" date="2007-11" db="EMBL/GenBank/DDBJ databases">
        <title>Complete sequence of chromosome of Shewanella baltica OS195.</title>
        <authorList>
            <consortium name="US DOE Joint Genome Institute"/>
            <person name="Copeland A."/>
            <person name="Lucas S."/>
            <person name="Lapidus A."/>
            <person name="Barry K."/>
            <person name="Glavina del Rio T."/>
            <person name="Dalin E."/>
            <person name="Tice H."/>
            <person name="Pitluck S."/>
            <person name="Chain P."/>
            <person name="Malfatti S."/>
            <person name="Shin M."/>
            <person name="Vergez L."/>
            <person name="Schmutz J."/>
            <person name="Larimer F."/>
            <person name="Land M."/>
            <person name="Hauser L."/>
            <person name="Kyrpides N."/>
            <person name="Kim E."/>
            <person name="Brettar I."/>
            <person name="Rodrigues J."/>
            <person name="Konstantinidis K."/>
            <person name="Klappenbach J."/>
            <person name="Hofle M."/>
            <person name="Tiedje J."/>
            <person name="Richardson P."/>
        </authorList>
    </citation>
    <scope>NUCLEOTIDE SEQUENCE [LARGE SCALE GENOMIC DNA]</scope>
    <source>
        <strain>OS195</strain>
    </source>
</reference>
<gene>
    <name type="ordered locus">Sbal195_1707</name>
</gene>
<accession>A9KXE1</accession>
<sequence>MAFDKKLLDIVACPVCKGKLEYDKTTQQLICKADKLAYPITEGIPVLLENRAVPLTESV</sequence>
<evidence type="ECO:0000255" key="1">
    <source>
        <dbReference type="HAMAP-Rule" id="MF_01187"/>
    </source>
</evidence>
<protein>
    <recommendedName>
        <fullName evidence="1">UPF0434 protein Sbal195_1707</fullName>
    </recommendedName>
</protein>
<feature type="chain" id="PRO_1000085463" description="UPF0434 protein Sbal195_1707">
    <location>
        <begin position="1"/>
        <end position="59"/>
    </location>
</feature>
<name>Y1707_SHEB9</name>
<dbReference type="EMBL" id="CP000891">
    <property type="protein sequence ID" value="ABX48880.1"/>
    <property type="molecule type" value="Genomic_DNA"/>
</dbReference>
<dbReference type="RefSeq" id="WP_006081200.1">
    <property type="nucleotide sequence ID" value="NC_009997.1"/>
</dbReference>
<dbReference type="SMR" id="A9KXE1"/>
<dbReference type="KEGG" id="sbn:Sbal195_1707"/>
<dbReference type="HOGENOM" id="CLU_155659_3_1_6"/>
<dbReference type="Proteomes" id="UP000000770">
    <property type="component" value="Chromosome"/>
</dbReference>
<dbReference type="GO" id="GO:0005829">
    <property type="term" value="C:cytosol"/>
    <property type="evidence" value="ECO:0007669"/>
    <property type="project" value="TreeGrafter"/>
</dbReference>
<dbReference type="FunFam" id="2.20.25.10:FF:000002">
    <property type="entry name" value="UPF0434 protein YcaR"/>
    <property type="match status" value="1"/>
</dbReference>
<dbReference type="Gene3D" id="2.20.25.10">
    <property type="match status" value="1"/>
</dbReference>
<dbReference type="HAMAP" id="MF_01187">
    <property type="entry name" value="UPF0434"/>
    <property type="match status" value="1"/>
</dbReference>
<dbReference type="InterPro" id="IPR005651">
    <property type="entry name" value="Trm112-like"/>
</dbReference>
<dbReference type="PANTHER" id="PTHR33505:SF4">
    <property type="entry name" value="PROTEIN PREY, MITOCHONDRIAL"/>
    <property type="match status" value="1"/>
</dbReference>
<dbReference type="PANTHER" id="PTHR33505">
    <property type="entry name" value="ZGC:162634"/>
    <property type="match status" value="1"/>
</dbReference>
<dbReference type="Pfam" id="PF03966">
    <property type="entry name" value="Trm112p"/>
    <property type="match status" value="1"/>
</dbReference>
<dbReference type="SUPFAM" id="SSF158997">
    <property type="entry name" value="Trm112p-like"/>
    <property type="match status" value="1"/>
</dbReference>
<proteinExistence type="inferred from homology"/>
<comment type="similarity">
    <text evidence="1">Belongs to the UPF0434 family.</text>
</comment>